<protein>
    <recommendedName>
        <fullName evidence="1">Arginine--tRNA ligase</fullName>
        <ecNumber evidence="1">6.1.1.19</ecNumber>
    </recommendedName>
    <alternativeName>
        <fullName evidence="1">Arginyl-tRNA synthetase</fullName>
        <shortName evidence="1">ArgRS</shortName>
    </alternativeName>
</protein>
<dbReference type="EC" id="6.1.1.19" evidence="1"/>
<dbReference type="EMBL" id="CU928162">
    <property type="protein sequence ID" value="CAR08336.2"/>
    <property type="molecule type" value="Genomic_DNA"/>
</dbReference>
<dbReference type="RefSeq" id="WP_001025316.1">
    <property type="nucleotide sequence ID" value="NC_011745.1"/>
</dbReference>
<dbReference type="SMR" id="B7MW70"/>
<dbReference type="KEGG" id="ecq:ECED1_2145"/>
<dbReference type="HOGENOM" id="CLU_006406_5_1_6"/>
<dbReference type="Proteomes" id="UP000000748">
    <property type="component" value="Chromosome"/>
</dbReference>
<dbReference type="GO" id="GO:0005737">
    <property type="term" value="C:cytoplasm"/>
    <property type="evidence" value="ECO:0007669"/>
    <property type="project" value="UniProtKB-SubCell"/>
</dbReference>
<dbReference type="GO" id="GO:0004814">
    <property type="term" value="F:arginine-tRNA ligase activity"/>
    <property type="evidence" value="ECO:0007669"/>
    <property type="project" value="UniProtKB-UniRule"/>
</dbReference>
<dbReference type="GO" id="GO:0005524">
    <property type="term" value="F:ATP binding"/>
    <property type="evidence" value="ECO:0007669"/>
    <property type="project" value="UniProtKB-UniRule"/>
</dbReference>
<dbReference type="GO" id="GO:0006420">
    <property type="term" value="P:arginyl-tRNA aminoacylation"/>
    <property type="evidence" value="ECO:0007669"/>
    <property type="project" value="UniProtKB-UniRule"/>
</dbReference>
<dbReference type="CDD" id="cd07956">
    <property type="entry name" value="Anticodon_Ia_Arg"/>
    <property type="match status" value="1"/>
</dbReference>
<dbReference type="CDD" id="cd00671">
    <property type="entry name" value="ArgRS_core"/>
    <property type="match status" value="1"/>
</dbReference>
<dbReference type="FunFam" id="1.10.730.10:FF:000001">
    <property type="entry name" value="Arginine--tRNA ligase"/>
    <property type="match status" value="1"/>
</dbReference>
<dbReference type="FunFam" id="3.30.1360.70:FF:000001">
    <property type="entry name" value="Arginine--tRNA ligase"/>
    <property type="match status" value="1"/>
</dbReference>
<dbReference type="FunFam" id="3.40.50.620:FF:000030">
    <property type="entry name" value="Arginine--tRNA ligase"/>
    <property type="match status" value="1"/>
</dbReference>
<dbReference type="Gene3D" id="3.30.1360.70">
    <property type="entry name" value="Arginyl tRNA synthetase N-terminal domain"/>
    <property type="match status" value="1"/>
</dbReference>
<dbReference type="Gene3D" id="3.40.50.620">
    <property type="entry name" value="HUPs"/>
    <property type="match status" value="1"/>
</dbReference>
<dbReference type="Gene3D" id="1.10.730.10">
    <property type="entry name" value="Isoleucyl-tRNA Synthetase, Domain 1"/>
    <property type="match status" value="1"/>
</dbReference>
<dbReference type="HAMAP" id="MF_00123">
    <property type="entry name" value="Arg_tRNA_synth"/>
    <property type="match status" value="1"/>
</dbReference>
<dbReference type="InterPro" id="IPR001412">
    <property type="entry name" value="aa-tRNA-synth_I_CS"/>
</dbReference>
<dbReference type="InterPro" id="IPR001278">
    <property type="entry name" value="Arg-tRNA-ligase"/>
</dbReference>
<dbReference type="InterPro" id="IPR005148">
    <property type="entry name" value="Arg-tRNA-synth_N"/>
</dbReference>
<dbReference type="InterPro" id="IPR036695">
    <property type="entry name" value="Arg-tRNA-synth_N_sf"/>
</dbReference>
<dbReference type="InterPro" id="IPR035684">
    <property type="entry name" value="ArgRS_core"/>
</dbReference>
<dbReference type="InterPro" id="IPR008909">
    <property type="entry name" value="DALR_anticod-bd"/>
</dbReference>
<dbReference type="InterPro" id="IPR014729">
    <property type="entry name" value="Rossmann-like_a/b/a_fold"/>
</dbReference>
<dbReference type="InterPro" id="IPR009080">
    <property type="entry name" value="tRNAsynth_Ia_anticodon-bd"/>
</dbReference>
<dbReference type="NCBIfam" id="TIGR00456">
    <property type="entry name" value="argS"/>
    <property type="match status" value="1"/>
</dbReference>
<dbReference type="PANTHER" id="PTHR11956:SF5">
    <property type="entry name" value="ARGININE--TRNA LIGASE, CYTOPLASMIC"/>
    <property type="match status" value="1"/>
</dbReference>
<dbReference type="PANTHER" id="PTHR11956">
    <property type="entry name" value="ARGINYL-TRNA SYNTHETASE"/>
    <property type="match status" value="1"/>
</dbReference>
<dbReference type="Pfam" id="PF03485">
    <property type="entry name" value="Arg_tRNA_synt_N"/>
    <property type="match status" value="1"/>
</dbReference>
<dbReference type="Pfam" id="PF05746">
    <property type="entry name" value="DALR_1"/>
    <property type="match status" value="1"/>
</dbReference>
<dbReference type="Pfam" id="PF00750">
    <property type="entry name" value="tRNA-synt_1d"/>
    <property type="match status" value="1"/>
</dbReference>
<dbReference type="PRINTS" id="PR01038">
    <property type="entry name" value="TRNASYNTHARG"/>
</dbReference>
<dbReference type="SMART" id="SM01016">
    <property type="entry name" value="Arg_tRNA_synt_N"/>
    <property type="match status" value="1"/>
</dbReference>
<dbReference type="SMART" id="SM00836">
    <property type="entry name" value="DALR_1"/>
    <property type="match status" value="1"/>
</dbReference>
<dbReference type="SUPFAM" id="SSF47323">
    <property type="entry name" value="Anticodon-binding domain of a subclass of class I aminoacyl-tRNA synthetases"/>
    <property type="match status" value="1"/>
</dbReference>
<dbReference type="SUPFAM" id="SSF55190">
    <property type="entry name" value="Arginyl-tRNA synthetase (ArgRS), N-terminal 'additional' domain"/>
    <property type="match status" value="1"/>
</dbReference>
<dbReference type="SUPFAM" id="SSF52374">
    <property type="entry name" value="Nucleotidylyl transferase"/>
    <property type="match status" value="1"/>
</dbReference>
<dbReference type="PROSITE" id="PS00178">
    <property type="entry name" value="AA_TRNA_LIGASE_I"/>
    <property type="match status" value="1"/>
</dbReference>
<feature type="chain" id="PRO_1000198908" description="Arginine--tRNA ligase">
    <location>
        <begin position="1"/>
        <end position="577"/>
    </location>
</feature>
<feature type="short sequence motif" description="'HIGH' region">
    <location>
        <begin position="122"/>
        <end position="132"/>
    </location>
</feature>
<comment type="catalytic activity">
    <reaction evidence="1">
        <text>tRNA(Arg) + L-arginine + ATP = L-arginyl-tRNA(Arg) + AMP + diphosphate</text>
        <dbReference type="Rhea" id="RHEA:20301"/>
        <dbReference type="Rhea" id="RHEA-COMP:9658"/>
        <dbReference type="Rhea" id="RHEA-COMP:9673"/>
        <dbReference type="ChEBI" id="CHEBI:30616"/>
        <dbReference type="ChEBI" id="CHEBI:32682"/>
        <dbReference type="ChEBI" id="CHEBI:33019"/>
        <dbReference type="ChEBI" id="CHEBI:78442"/>
        <dbReference type="ChEBI" id="CHEBI:78513"/>
        <dbReference type="ChEBI" id="CHEBI:456215"/>
        <dbReference type="EC" id="6.1.1.19"/>
    </reaction>
</comment>
<comment type="subunit">
    <text evidence="1">Monomer.</text>
</comment>
<comment type="subcellular location">
    <subcellularLocation>
        <location evidence="1">Cytoplasm</location>
    </subcellularLocation>
</comment>
<comment type="similarity">
    <text evidence="1">Belongs to the class-I aminoacyl-tRNA synthetase family.</text>
</comment>
<evidence type="ECO:0000255" key="1">
    <source>
        <dbReference type="HAMAP-Rule" id="MF_00123"/>
    </source>
</evidence>
<gene>
    <name evidence="1" type="primary">argS</name>
    <name type="ordered locus">ECED1_2145</name>
</gene>
<keyword id="KW-0030">Aminoacyl-tRNA synthetase</keyword>
<keyword id="KW-0067">ATP-binding</keyword>
<keyword id="KW-0963">Cytoplasm</keyword>
<keyword id="KW-0436">Ligase</keyword>
<keyword id="KW-0547">Nucleotide-binding</keyword>
<keyword id="KW-0648">Protein biosynthesis</keyword>
<sequence length="577" mass="64663">MNIQALLSEKVRQAMIAAGAPADCEPQVRQSAKVQFGDYQANGMMAVAKKLGMAPRQLAEQVLTHLDLNGIASKVEIAGPGFINIFLDPAFLAEHVQQALASDRLGVATPEKQTIVVDYSAPNVAKEMHVGHLRSTIIGDAAVRTLEFLGHKVIRANHVGDWGTQFGMLIAWLEKQQQENAGEMELADLEGFYRDAKKHYDEDEEFAERARNYVVKLQSGDEYFHEMWRKLVDITMTQNQITYDRLNVTLTRDDVMGESLYNPMLPGIVADLKAKGLAVESEGATVVFLDEFKNKEGEPMGVIIQKKDGGYLYTTTDIACAKYRYETLHADRVLYYIDSRQHQHLMQAWAIVRKAGYVPESVPLEHHMFGMMLGKDGKPFKTRAGGTVKLADLLDEALERARRLVAEKNPDMPADELEKLANAVGIGAVKYADLSKNRTTDYIFDWDNMLAFEGNTAPYMQYAYTRVLSVFRKAEINEEQLAAAPVIIREDREAQLAARLLQFEETLTVVAREGTPHVMCAYLYDLAGLFSGFYEHCPILSAENEEVRNSRLKLAQLTAKTLKLGLDTLGIETVERM</sequence>
<organism>
    <name type="scientific">Escherichia coli O81 (strain ED1a)</name>
    <dbReference type="NCBI Taxonomy" id="585397"/>
    <lineage>
        <taxon>Bacteria</taxon>
        <taxon>Pseudomonadati</taxon>
        <taxon>Pseudomonadota</taxon>
        <taxon>Gammaproteobacteria</taxon>
        <taxon>Enterobacterales</taxon>
        <taxon>Enterobacteriaceae</taxon>
        <taxon>Escherichia</taxon>
    </lineage>
</organism>
<accession>B7MW70</accession>
<proteinExistence type="inferred from homology"/>
<reference key="1">
    <citation type="journal article" date="2009" name="PLoS Genet.">
        <title>Organised genome dynamics in the Escherichia coli species results in highly diverse adaptive paths.</title>
        <authorList>
            <person name="Touchon M."/>
            <person name="Hoede C."/>
            <person name="Tenaillon O."/>
            <person name="Barbe V."/>
            <person name="Baeriswyl S."/>
            <person name="Bidet P."/>
            <person name="Bingen E."/>
            <person name="Bonacorsi S."/>
            <person name="Bouchier C."/>
            <person name="Bouvet O."/>
            <person name="Calteau A."/>
            <person name="Chiapello H."/>
            <person name="Clermont O."/>
            <person name="Cruveiller S."/>
            <person name="Danchin A."/>
            <person name="Diard M."/>
            <person name="Dossat C."/>
            <person name="Karoui M.E."/>
            <person name="Frapy E."/>
            <person name="Garry L."/>
            <person name="Ghigo J.M."/>
            <person name="Gilles A.M."/>
            <person name="Johnson J."/>
            <person name="Le Bouguenec C."/>
            <person name="Lescat M."/>
            <person name="Mangenot S."/>
            <person name="Martinez-Jehanne V."/>
            <person name="Matic I."/>
            <person name="Nassif X."/>
            <person name="Oztas S."/>
            <person name="Petit M.A."/>
            <person name="Pichon C."/>
            <person name="Rouy Z."/>
            <person name="Ruf C.S."/>
            <person name="Schneider D."/>
            <person name="Tourret J."/>
            <person name="Vacherie B."/>
            <person name="Vallenet D."/>
            <person name="Medigue C."/>
            <person name="Rocha E.P.C."/>
            <person name="Denamur E."/>
        </authorList>
    </citation>
    <scope>NUCLEOTIDE SEQUENCE [LARGE SCALE GENOMIC DNA]</scope>
    <source>
        <strain>ED1a</strain>
    </source>
</reference>
<name>SYR_ECO81</name>